<gene>
    <name type="primary">hphIAM</name>
    <name evidence="5" type="synonym">hphIMC</name>
</gene>
<proteinExistence type="inferred from homology"/>
<keyword id="KW-0238">DNA-binding</keyword>
<keyword id="KW-0489">Methyltransferase</keyword>
<keyword id="KW-0680">Restriction system</keyword>
<keyword id="KW-0949">S-adenosyl-L-methionine</keyword>
<keyword id="KW-0808">Transferase</keyword>
<name>MTHA_HAEPH</name>
<sequence length="372" mass="42248">MGFHSKNNSEYNGDFIILSSIYYWMILLYCIKFFLSKYLIYCMSLTYIDLFSGAGGFSLGFDRAGFHQLLSVEIEPHYCDTYRANFPDHQVLQQDLTTLSDDNLLRHINHRKVDVVIGGPPCQGFSMAGKIGRTFADDPRNHLFKEFVRVVKLTQPKFFVMENVARLFTHNSGKTRAEITEQFERLGYKVKCKVLNAADFGVPQLRSRIVFIGRKDGGEITFPEPSHTEYNTVGDAIGHFPKLNAGENSLILNHEAMNHSTQMLEKMSFVKNGGDRNDIPESLRPISGDVRKYIRYHSDKPSVCVTGDMRKVFHYEQNRALTVRELAALQSFPDDFVFLGKKIAQQQQVGNAVPPLLAQAIAEAVLKMNTNE</sequence>
<comment type="function">
    <text evidence="3 4 6">A methylase that recognizes the double-stranded sequence 5'-GGTGA-3' and protects the DNA from cleavage by the HphI endonuclease (PubMed:8759008). Probably methylates C-2 on the bottom strand (Probable) (PubMed:12654995).</text>
</comment>
<comment type="catalytic activity">
    <reaction evidence="2">
        <text>a 2'-deoxycytidine in DNA + S-adenosyl-L-methionine = a 5-methyl-2'-deoxycytidine in DNA + S-adenosyl-L-homocysteine + H(+)</text>
        <dbReference type="Rhea" id="RHEA:13681"/>
        <dbReference type="Rhea" id="RHEA-COMP:11369"/>
        <dbReference type="Rhea" id="RHEA-COMP:11370"/>
        <dbReference type="ChEBI" id="CHEBI:15378"/>
        <dbReference type="ChEBI" id="CHEBI:57856"/>
        <dbReference type="ChEBI" id="CHEBI:59789"/>
        <dbReference type="ChEBI" id="CHEBI:85452"/>
        <dbReference type="ChEBI" id="CHEBI:85454"/>
        <dbReference type="EC" id="2.1.1.37"/>
    </reaction>
</comment>
<comment type="miscellaneous">
    <text evidence="3">Both this methylase and M2.HphI protect DNA from cleavage by HphI.</text>
</comment>
<comment type="similarity">
    <text evidence="1">Belongs to the class I-like SAM-binding methyltransferase superfamily. C5-methyltransferase family.</text>
</comment>
<evidence type="ECO:0000255" key="1">
    <source>
        <dbReference type="PROSITE-ProRule" id="PRU01016"/>
    </source>
</evidence>
<evidence type="ECO:0000255" key="2">
    <source>
        <dbReference type="PROSITE-ProRule" id="PRU10018"/>
    </source>
</evidence>
<evidence type="ECO:0000269" key="3">
    <source>
    </source>
</evidence>
<evidence type="ECO:0000303" key="4">
    <source>
    </source>
</evidence>
<evidence type="ECO:0000303" key="5">
    <source>
    </source>
</evidence>
<evidence type="ECO:0000305" key="6">
    <source>
    </source>
</evidence>
<feature type="chain" id="PRO_0000087884" description="Type II methyltransferase M1.HphI">
    <location>
        <begin position="1"/>
        <end position="372"/>
    </location>
</feature>
<feature type="domain" description="SAM-dependent MTase C5-type" evidence="1">
    <location>
        <begin position="45"/>
        <end position="372"/>
    </location>
</feature>
<feature type="active site" evidence="1 2">
    <location>
        <position position="122"/>
    </location>
</feature>
<reference key="1">
    <citation type="journal article" date="1996" name="Nucleic Acids Res.">
        <title>Cloning and analysis of the genes encoding the type IIS restriction-modification system HphI from Haemophilus parahaemolyticus.</title>
        <authorList>
            <person name="Lubys A."/>
            <person name="Lubiene J."/>
            <person name="Kulakauskkas S."/>
            <person name="Stankevicius K."/>
            <person name="Timinskas A."/>
            <person name="Janulaitis A."/>
        </authorList>
    </citation>
    <scope>NUCLEOTIDE SEQUENCE [GENOMIC DNA]</scope>
    <scope>FUNCTION</scope>
    <source>
        <strain>ATCC 49700</strain>
    </source>
</reference>
<reference key="2">
    <citation type="journal article" date="2003" name="Nucleic Acids Res.">
        <title>A nomenclature for restriction enzymes, DNA methyltransferases, homing endonucleases and their genes.</title>
        <authorList>
            <person name="Roberts R.J."/>
            <person name="Belfort M."/>
            <person name="Bestor T."/>
            <person name="Bhagwat A.S."/>
            <person name="Bickle T.A."/>
            <person name="Bitinaite J."/>
            <person name="Blumenthal R.M."/>
            <person name="Degtyarev S.K."/>
            <person name="Dryden D.T."/>
            <person name="Dybvig K."/>
            <person name="Firman K."/>
            <person name="Gromova E.S."/>
            <person name="Gumport R.I."/>
            <person name="Halford S.E."/>
            <person name="Hattman S."/>
            <person name="Heitman J."/>
            <person name="Hornby D.P."/>
            <person name="Janulaitis A."/>
            <person name="Jeltsch A."/>
            <person name="Josephsen J."/>
            <person name="Kiss A."/>
            <person name="Klaenhammer T.R."/>
            <person name="Kobayashi I."/>
            <person name="Kong H."/>
            <person name="Krueger D.H."/>
            <person name="Lacks S."/>
            <person name="Marinus M.G."/>
            <person name="Miyahara M."/>
            <person name="Morgan R.D."/>
            <person name="Murray N.E."/>
            <person name="Nagaraja V."/>
            <person name="Piekarowicz A."/>
            <person name="Pingoud A."/>
            <person name="Raleigh E."/>
            <person name="Rao D.N."/>
            <person name="Reich N."/>
            <person name="Repin V.E."/>
            <person name="Selker E.U."/>
            <person name="Shaw P.C."/>
            <person name="Stein D.C."/>
            <person name="Stoddard B.L."/>
            <person name="Szybalski W."/>
            <person name="Trautner T.A."/>
            <person name="Van Etten J.L."/>
            <person name="Vitor J.M."/>
            <person name="Wilson G.G."/>
            <person name="Xu S.Y."/>
        </authorList>
    </citation>
    <scope>NOMENCLATURE</scope>
</reference>
<dbReference type="EC" id="2.1.1.37"/>
<dbReference type="EMBL" id="X85374">
    <property type="protein sequence ID" value="CAA59690.1"/>
    <property type="molecule type" value="Genomic_DNA"/>
</dbReference>
<dbReference type="PIR" id="S70707">
    <property type="entry name" value="S70707"/>
</dbReference>
<dbReference type="SMR" id="P50192"/>
<dbReference type="REBASE" id="203182">
    <property type="entry name" value="M.Bam1267ORF2759P"/>
</dbReference>
<dbReference type="REBASE" id="203184">
    <property type="entry name" value="M.Bam1267ORF990P"/>
</dbReference>
<dbReference type="REBASE" id="203185">
    <property type="entry name" value="M.Bam1267ORF665P"/>
</dbReference>
<dbReference type="REBASE" id="3660">
    <property type="entry name" value="M1.HphI"/>
</dbReference>
<dbReference type="REBASE" id="767834">
    <property type="entry name" value="M2.SspSPORF1906P"/>
</dbReference>
<dbReference type="PRO" id="PR:P50192"/>
<dbReference type="GO" id="GO:0003886">
    <property type="term" value="F:DNA (cytosine-5-)-methyltransferase activity"/>
    <property type="evidence" value="ECO:0007669"/>
    <property type="project" value="UniProtKB-EC"/>
</dbReference>
<dbReference type="GO" id="GO:0003677">
    <property type="term" value="F:DNA binding"/>
    <property type="evidence" value="ECO:0007669"/>
    <property type="project" value="UniProtKB-KW"/>
</dbReference>
<dbReference type="GO" id="GO:0009307">
    <property type="term" value="P:DNA restriction-modification system"/>
    <property type="evidence" value="ECO:0007669"/>
    <property type="project" value="UniProtKB-KW"/>
</dbReference>
<dbReference type="GO" id="GO:0032259">
    <property type="term" value="P:methylation"/>
    <property type="evidence" value="ECO:0007669"/>
    <property type="project" value="UniProtKB-KW"/>
</dbReference>
<dbReference type="GO" id="GO:0044027">
    <property type="term" value="P:negative regulation of gene expression via chromosomal CpG island methylation"/>
    <property type="evidence" value="ECO:0007669"/>
    <property type="project" value="TreeGrafter"/>
</dbReference>
<dbReference type="CDD" id="cd00315">
    <property type="entry name" value="Cyt_C5_DNA_methylase"/>
    <property type="match status" value="1"/>
</dbReference>
<dbReference type="Gene3D" id="3.90.120.10">
    <property type="entry name" value="DNA Methylase, subunit A, domain 2"/>
    <property type="match status" value="1"/>
</dbReference>
<dbReference type="Gene3D" id="3.40.50.150">
    <property type="entry name" value="Vaccinia Virus protein VP39"/>
    <property type="match status" value="1"/>
</dbReference>
<dbReference type="InterPro" id="IPR050390">
    <property type="entry name" value="C5-Methyltransferase"/>
</dbReference>
<dbReference type="InterPro" id="IPR018117">
    <property type="entry name" value="C5_DNA_meth_AS"/>
</dbReference>
<dbReference type="InterPro" id="IPR001525">
    <property type="entry name" value="C5_MeTfrase"/>
</dbReference>
<dbReference type="InterPro" id="IPR031303">
    <property type="entry name" value="C5_meth_CS"/>
</dbReference>
<dbReference type="InterPro" id="IPR029063">
    <property type="entry name" value="SAM-dependent_MTases_sf"/>
</dbReference>
<dbReference type="NCBIfam" id="TIGR00675">
    <property type="entry name" value="dcm"/>
    <property type="match status" value="1"/>
</dbReference>
<dbReference type="PANTHER" id="PTHR10629">
    <property type="entry name" value="CYTOSINE-SPECIFIC METHYLTRANSFERASE"/>
    <property type="match status" value="1"/>
</dbReference>
<dbReference type="PANTHER" id="PTHR10629:SF52">
    <property type="entry name" value="DNA (CYTOSINE-5)-METHYLTRANSFERASE 1"/>
    <property type="match status" value="1"/>
</dbReference>
<dbReference type="Pfam" id="PF00145">
    <property type="entry name" value="DNA_methylase"/>
    <property type="match status" value="1"/>
</dbReference>
<dbReference type="PRINTS" id="PR00105">
    <property type="entry name" value="C5METTRFRASE"/>
</dbReference>
<dbReference type="SUPFAM" id="SSF53335">
    <property type="entry name" value="S-adenosyl-L-methionine-dependent methyltransferases"/>
    <property type="match status" value="1"/>
</dbReference>
<dbReference type="PROSITE" id="PS00094">
    <property type="entry name" value="C5_MTASE_1"/>
    <property type="match status" value="1"/>
</dbReference>
<dbReference type="PROSITE" id="PS00095">
    <property type="entry name" value="C5_MTASE_2"/>
    <property type="match status" value="1"/>
</dbReference>
<dbReference type="PROSITE" id="PS51679">
    <property type="entry name" value="SAM_MT_C5"/>
    <property type="match status" value="1"/>
</dbReference>
<organism>
    <name type="scientific">Haemophilus parahaemolyticus</name>
    <dbReference type="NCBI Taxonomy" id="735"/>
    <lineage>
        <taxon>Bacteria</taxon>
        <taxon>Pseudomonadati</taxon>
        <taxon>Pseudomonadota</taxon>
        <taxon>Gammaproteobacteria</taxon>
        <taxon>Pasteurellales</taxon>
        <taxon>Pasteurellaceae</taxon>
        <taxon>Haemophilus</taxon>
    </lineage>
</organism>
<protein>
    <recommendedName>
        <fullName evidence="4">Type II methyltransferase M1.HphI</fullName>
        <shortName evidence="4">M1.HphI</shortName>
        <ecNumber>2.1.1.37</ecNumber>
    </recommendedName>
    <alternativeName>
        <fullName>Cytosine-specific methyltransferase HphIA</fullName>
    </alternativeName>
    <alternativeName>
        <fullName>M.Hphi(C)</fullName>
    </alternativeName>
    <alternativeName>
        <fullName>Modification methylase HphIA</fullName>
        <shortName evidence="5">M.HphIA</shortName>
    </alternativeName>
</protein>
<accession>P50192</accession>